<organism>
    <name type="scientific">Deinococcus deserti (strain DSM 17065 / CIP 109153 / LMG 22923 / VCD115)</name>
    <dbReference type="NCBI Taxonomy" id="546414"/>
    <lineage>
        <taxon>Bacteria</taxon>
        <taxon>Thermotogati</taxon>
        <taxon>Deinococcota</taxon>
        <taxon>Deinococci</taxon>
        <taxon>Deinococcales</taxon>
        <taxon>Deinococcaceae</taxon>
        <taxon>Deinococcus</taxon>
    </lineage>
</organism>
<reference key="1">
    <citation type="journal article" date="2009" name="PLoS Genet.">
        <title>Alliance of proteomics and genomics to unravel the specificities of Sahara bacterium Deinococcus deserti.</title>
        <authorList>
            <person name="de Groot A."/>
            <person name="Dulermo R."/>
            <person name="Ortet P."/>
            <person name="Blanchard L."/>
            <person name="Guerin P."/>
            <person name="Fernandez B."/>
            <person name="Vacherie B."/>
            <person name="Dossat C."/>
            <person name="Jolivet E."/>
            <person name="Siguier P."/>
            <person name="Chandler M."/>
            <person name="Barakat M."/>
            <person name="Dedieu A."/>
            <person name="Barbe V."/>
            <person name="Heulin T."/>
            <person name="Sommer S."/>
            <person name="Achouak W."/>
            <person name="Armengaud J."/>
        </authorList>
    </citation>
    <scope>NUCLEOTIDE SEQUENCE [LARGE SCALE GENOMIC DNA]</scope>
    <source>
        <strain>DSM 17065 / CIP 109153 / LMG 22923 / VCD115</strain>
    </source>
</reference>
<keyword id="KW-0131">Cell cycle</keyword>
<keyword id="KW-0132">Cell division</keyword>
<keyword id="KW-1003">Cell membrane</keyword>
<keyword id="KW-0133">Cell shape</keyword>
<keyword id="KW-0961">Cell wall biogenesis/degradation</keyword>
<keyword id="KW-0328">Glycosyltransferase</keyword>
<keyword id="KW-0472">Membrane</keyword>
<keyword id="KW-0573">Peptidoglycan synthesis</keyword>
<keyword id="KW-1185">Reference proteome</keyword>
<keyword id="KW-0808">Transferase</keyword>
<gene>
    <name evidence="1" type="primary">murG</name>
    <name type="ordered locus">Deide_14550</name>
</gene>
<protein>
    <recommendedName>
        <fullName evidence="1">UDP-N-acetylglucosamine--N-acetylmuramyl-(pentapeptide) pyrophosphoryl-undecaprenol N-acetylglucosamine transferase</fullName>
        <ecNumber evidence="1">2.4.1.227</ecNumber>
    </recommendedName>
    <alternativeName>
        <fullName evidence="1">Undecaprenyl-PP-MurNAc-pentapeptide-UDPGlcNAc GlcNAc transferase</fullName>
    </alternativeName>
</protein>
<sequence length="382" mass="40120">MSLVVMATGGTGGHIYPAVATARELNARGHETLLLGQRGGMEERVAAEQGLSFEGVDAGKLARSGQGRPDPRELFRAVRGVVEARRVLQARRPALVVGYGGFASLPGVLAAQSLGIATVLHEQNARLGLTQRVAVGRARAVGTAYEQVLGLPAGEGTLVGMPVREERLSREEAQRRLGLHSGPLTVFVMGGSQGSLFLNNSVPDTLRNILGKEGLLSGLGSEAGQIDLDFTHPRAGGAAVQVLHSTGPRWLADVAPRVHDLEWYHAVGYVDTVAAWAAADLAITRAGTGTLAEAAFHGVPLVMVPLPESSENHQYHNALSVQQAGAGRVVEQKNVQEALGAAVLECAEPGTRMAMRDAALARAQIGAAARFADLIEQHLPRS</sequence>
<dbReference type="EC" id="2.4.1.227" evidence="1"/>
<dbReference type="EMBL" id="CP001114">
    <property type="protein sequence ID" value="ACO46407.1"/>
    <property type="molecule type" value="Genomic_DNA"/>
</dbReference>
<dbReference type="RefSeq" id="WP_012693530.1">
    <property type="nucleotide sequence ID" value="NC_012526.1"/>
</dbReference>
<dbReference type="SMR" id="C1CW40"/>
<dbReference type="STRING" id="546414.Deide_14550"/>
<dbReference type="CAZy" id="GT28">
    <property type="family name" value="Glycosyltransferase Family 28"/>
</dbReference>
<dbReference type="PaxDb" id="546414-Deide_14550"/>
<dbReference type="KEGG" id="ddr:Deide_14550"/>
<dbReference type="eggNOG" id="COG0707">
    <property type="taxonomic scope" value="Bacteria"/>
</dbReference>
<dbReference type="HOGENOM" id="CLU_037404_0_0_0"/>
<dbReference type="OrthoDB" id="9808936at2"/>
<dbReference type="UniPathway" id="UPA00219"/>
<dbReference type="Proteomes" id="UP000002208">
    <property type="component" value="Chromosome"/>
</dbReference>
<dbReference type="GO" id="GO:0005886">
    <property type="term" value="C:plasma membrane"/>
    <property type="evidence" value="ECO:0007669"/>
    <property type="project" value="UniProtKB-SubCell"/>
</dbReference>
<dbReference type="GO" id="GO:0051991">
    <property type="term" value="F:UDP-N-acetyl-D-glucosamine:N-acetylmuramoyl-L-alanyl-D-glutamyl-meso-2,6-diaminopimelyl-D-alanyl-D-alanine-diphosphoundecaprenol 4-beta-N-acetylglucosaminlytransferase activity"/>
    <property type="evidence" value="ECO:0007669"/>
    <property type="project" value="RHEA"/>
</dbReference>
<dbReference type="GO" id="GO:0050511">
    <property type="term" value="F:undecaprenyldiphospho-muramoylpentapeptide beta-N-acetylglucosaminyltransferase activity"/>
    <property type="evidence" value="ECO:0007669"/>
    <property type="project" value="UniProtKB-UniRule"/>
</dbReference>
<dbReference type="GO" id="GO:0005975">
    <property type="term" value="P:carbohydrate metabolic process"/>
    <property type="evidence" value="ECO:0007669"/>
    <property type="project" value="InterPro"/>
</dbReference>
<dbReference type="GO" id="GO:0051301">
    <property type="term" value="P:cell division"/>
    <property type="evidence" value="ECO:0007669"/>
    <property type="project" value="UniProtKB-KW"/>
</dbReference>
<dbReference type="GO" id="GO:0071555">
    <property type="term" value="P:cell wall organization"/>
    <property type="evidence" value="ECO:0007669"/>
    <property type="project" value="UniProtKB-KW"/>
</dbReference>
<dbReference type="GO" id="GO:0030259">
    <property type="term" value="P:lipid glycosylation"/>
    <property type="evidence" value="ECO:0007669"/>
    <property type="project" value="UniProtKB-UniRule"/>
</dbReference>
<dbReference type="GO" id="GO:0009252">
    <property type="term" value="P:peptidoglycan biosynthetic process"/>
    <property type="evidence" value="ECO:0007669"/>
    <property type="project" value="UniProtKB-UniRule"/>
</dbReference>
<dbReference type="GO" id="GO:0008360">
    <property type="term" value="P:regulation of cell shape"/>
    <property type="evidence" value="ECO:0007669"/>
    <property type="project" value="UniProtKB-KW"/>
</dbReference>
<dbReference type="CDD" id="cd03785">
    <property type="entry name" value="GT28_MurG"/>
    <property type="match status" value="1"/>
</dbReference>
<dbReference type="Gene3D" id="3.40.50.2000">
    <property type="entry name" value="Glycogen Phosphorylase B"/>
    <property type="match status" value="2"/>
</dbReference>
<dbReference type="HAMAP" id="MF_00033">
    <property type="entry name" value="MurG"/>
    <property type="match status" value="1"/>
</dbReference>
<dbReference type="InterPro" id="IPR006009">
    <property type="entry name" value="GlcNAc_MurG"/>
</dbReference>
<dbReference type="InterPro" id="IPR007235">
    <property type="entry name" value="Glyco_trans_28_C"/>
</dbReference>
<dbReference type="InterPro" id="IPR004276">
    <property type="entry name" value="GlycoTrans_28_N"/>
</dbReference>
<dbReference type="NCBIfam" id="TIGR01133">
    <property type="entry name" value="murG"/>
    <property type="match status" value="1"/>
</dbReference>
<dbReference type="PANTHER" id="PTHR21015:SF22">
    <property type="entry name" value="GLYCOSYLTRANSFERASE"/>
    <property type="match status" value="1"/>
</dbReference>
<dbReference type="PANTHER" id="PTHR21015">
    <property type="entry name" value="UDP-N-ACETYLGLUCOSAMINE--N-ACETYLMURAMYL-(PENTAPEPTIDE) PYROPHOSPHORYL-UNDECAPRENOL N-ACETYLGLUCOSAMINE TRANSFERASE 1"/>
    <property type="match status" value="1"/>
</dbReference>
<dbReference type="Pfam" id="PF04101">
    <property type="entry name" value="Glyco_tran_28_C"/>
    <property type="match status" value="1"/>
</dbReference>
<dbReference type="Pfam" id="PF03033">
    <property type="entry name" value="Glyco_transf_28"/>
    <property type="match status" value="1"/>
</dbReference>
<dbReference type="SUPFAM" id="SSF53756">
    <property type="entry name" value="UDP-Glycosyltransferase/glycogen phosphorylase"/>
    <property type="match status" value="1"/>
</dbReference>
<comment type="function">
    <text evidence="1">Cell wall formation. Catalyzes the transfer of a GlcNAc subunit on undecaprenyl-pyrophosphoryl-MurNAc-pentapeptide (lipid intermediate I) to form undecaprenyl-pyrophosphoryl-MurNAc-(pentapeptide)GlcNAc (lipid intermediate II).</text>
</comment>
<comment type="catalytic activity">
    <reaction evidence="1">
        <text>di-trans,octa-cis-undecaprenyl diphospho-N-acetyl-alpha-D-muramoyl-L-alanyl-D-glutamyl-meso-2,6-diaminopimeloyl-D-alanyl-D-alanine + UDP-N-acetyl-alpha-D-glucosamine = di-trans,octa-cis-undecaprenyl diphospho-[N-acetyl-alpha-D-glucosaminyl-(1-&gt;4)]-N-acetyl-alpha-D-muramoyl-L-alanyl-D-glutamyl-meso-2,6-diaminopimeloyl-D-alanyl-D-alanine + UDP + H(+)</text>
        <dbReference type="Rhea" id="RHEA:31227"/>
        <dbReference type="ChEBI" id="CHEBI:15378"/>
        <dbReference type="ChEBI" id="CHEBI:57705"/>
        <dbReference type="ChEBI" id="CHEBI:58223"/>
        <dbReference type="ChEBI" id="CHEBI:61387"/>
        <dbReference type="ChEBI" id="CHEBI:61388"/>
        <dbReference type="EC" id="2.4.1.227"/>
    </reaction>
</comment>
<comment type="pathway">
    <text evidence="1">Cell wall biogenesis; peptidoglycan biosynthesis.</text>
</comment>
<comment type="subcellular location">
    <subcellularLocation>
        <location evidence="1">Cell membrane</location>
        <topology evidence="1">Peripheral membrane protein</topology>
        <orientation evidence="1">Cytoplasmic side</orientation>
    </subcellularLocation>
</comment>
<comment type="similarity">
    <text evidence="1">Belongs to the glycosyltransferase 28 family. MurG subfamily.</text>
</comment>
<accession>C1CW40</accession>
<proteinExistence type="inferred from homology"/>
<evidence type="ECO:0000255" key="1">
    <source>
        <dbReference type="HAMAP-Rule" id="MF_00033"/>
    </source>
</evidence>
<feature type="chain" id="PRO_1000202016" description="UDP-N-acetylglucosamine--N-acetylmuramyl-(pentapeptide) pyrophosphoryl-undecaprenol N-acetylglucosamine transferase">
    <location>
        <begin position="1"/>
        <end position="382"/>
    </location>
</feature>
<feature type="binding site" evidence="1">
    <location>
        <begin position="11"/>
        <end position="13"/>
    </location>
    <ligand>
        <name>UDP-N-acetyl-alpha-D-glucosamine</name>
        <dbReference type="ChEBI" id="CHEBI:57705"/>
    </ligand>
</feature>
<feature type="binding site" evidence="1">
    <location>
        <position position="124"/>
    </location>
    <ligand>
        <name>UDP-N-acetyl-alpha-D-glucosamine</name>
        <dbReference type="ChEBI" id="CHEBI:57705"/>
    </ligand>
</feature>
<feature type="binding site" evidence="1">
    <location>
        <position position="164"/>
    </location>
    <ligand>
        <name>UDP-N-acetyl-alpha-D-glucosamine</name>
        <dbReference type="ChEBI" id="CHEBI:57705"/>
    </ligand>
</feature>
<feature type="binding site" evidence="1">
    <location>
        <position position="192"/>
    </location>
    <ligand>
        <name>UDP-N-acetyl-alpha-D-glucosamine</name>
        <dbReference type="ChEBI" id="CHEBI:57705"/>
    </ligand>
</feature>
<feature type="binding site" evidence="1">
    <location>
        <position position="314"/>
    </location>
    <ligand>
        <name>UDP-N-acetyl-alpha-D-glucosamine</name>
        <dbReference type="ChEBI" id="CHEBI:57705"/>
    </ligand>
</feature>
<name>MURG_DEIDV</name>